<protein>
    <recommendedName>
        <fullName evidence="1">ATP synthase subunit c</fullName>
    </recommendedName>
    <alternativeName>
        <fullName evidence="1">ATP synthase F(0) sector subunit c</fullName>
    </alternativeName>
    <alternativeName>
        <fullName evidence="1">F-type ATPase subunit c</fullName>
        <shortName evidence="1">F-ATPase subunit c</shortName>
    </alternativeName>
    <alternativeName>
        <fullName evidence="1">Lipid-binding protein</fullName>
    </alternativeName>
</protein>
<organism>
    <name type="scientific">Picosynechococcus sp. (strain ATCC 27264 / PCC 7002 / PR-6)</name>
    <name type="common">Agmenellum quadruplicatum</name>
    <dbReference type="NCBI Taxonomy" id="32049"/>
    <lineage>
        <taxon>Bacteria</taxon>
        <taxon>Bacillati</taxon>
        <taxon>Cyanobacteriota</taxon>
        <taxon>Cyanophyceae</taxon>
        <taxon>Oscillatoriophycideae</taxon>
        <taxon>Chroococcales</taxon>
        <taxon>Geminocystaceae</taxon>
        <taxon>Picosynechococcus</taxon>
    </lineage>
</organism>
<keyword id="KW-0066">ATP synthesis</keyword>
<keyword id="KW-0138">CF(0)</keyword>
<keyword id="KW-0375">Hydrogen ion transport</keyword>
<keyword id="KW-0406">Ion transport</keyword>
<keyword id="KW-0446">Lipid-binding</keyword>
<keyword id="KW-0472">Membrane</keyword>
<keyword id="KW-1185">Reference proteome</keyword>
<keyword id="KW-0793">Thylakoid</keyword>
<keyword id="KW-0812">Transmembrane</keyword>
<keyword id="KW-1133">Transmembrane helix</keyword>
<keyword id="KW-0813">Transport</keyword>
<comment type="function">
    <text evidence="1">F(1)F(0) ATP synthase produces ATP from ADP in the presence of a proton or sodium gradient. F-type ATPases consist of two structural domains, F(1) containing the extramembraneous catalytic core and F(0) containing the membrane proton channel, linked together by a central stalk and a peripheral stalk. During catalysis, ATP synthesis in the catalytic domain of F(1) is coupled via a rotary mechanism of the central stalk subunits to proton translocation.</text>
</comment>
<comment type="function">
    <text evidence="1">Key component of the F(0) channel; it plays a direct role in translocation across the membrane. A homomeric c-ring of between 10-14 subunits forms the central stalk rotor element with the F(1) delta and epsilon subunits.</text>
</comment>
<comment type="subunit">
    <text evidence="1">F-type ATPases have 2 components, F(1) - the catalytic core - and F(0) - the membrane proton channel. F(1) has five subunits: alpha(3), beta(3), gamma(1), delta(1), epsilon(1). F(0) has four main subunits: a(1), b(1), b'(1) and c(10-14). The alpha and beta chains form an alternating ring which encloses part of the gamma chain. F(1) is attached to F(0) by a central stalk formed by the gamma and epsilon chains, while a peripheral stalk is formed by the delta, b and b' chains.</text>
</comment>
<comment type="subcellular location">
    <subcellularLocation>
        <location evidence="1">Cellular thylakoid membrane</location>
        <topology evidence="1">Multi-pass membrane protein</topology>
    </subcellularLocation>
</comment>
<comment type="similarity">
    <text evidence="1">Belongs to the ATPase C chain family.</text>
</comment>
<proteinExistence type="inferred from homology"/>
<name>ATPL_PICP2</name>
<dbReference type="EMBL" id="CP000951">
    <property type="protein sequence ID" value="ACA98743.1"/>
    <property type="molecule type" value="Genomic_DNA"/>
</dbReference>
<dbReference type="RefSeq" id="WP_012306367.1">
    <property type="nucleotide sequence ID" value="NZ_JAHHPU010000001.1"/>
</dbReference>
<dbReference type="SMR" id="B1XHZ2"/>
<dbReference type="STRING" id="32049.SYNPCC7002_A0738"/>
<dbReference type="KEGG" id="syp:SYNPCC7002_A0738"/>
<dbReference type="eggNOG" id="COG0636">
    <property type="taxonomic scope" value="Bacteria"/>
</dbReference>
<dbReference type="HOGENOM" id="CLU_148047_2_0_3"/>
<dbReference type="Proteomes" id="UP000001688">
    <property type="component" value="Chromosome"/>
</dbReference>
<dbReference type="GO" id="GO:0031676">
    <property type="term" value="C:plasma membrane-derived thylakoid membrane"/>
    <property type="evidence" value="ECO:0007669"/>
    <property type="project" value="UniProtKB-SubCell"/>
</dbReference>
<dbReference type="GO" id="GO:0045259">
    <property type="term" value="C:proton-transporting ATP synthase complex"/>
    <property type="evidence" value="ECO:0007669"/>
    <property type="project" value="UniProtKB-KW"/>
</dbReference>
<dbReference type="GO" id="GO:0033177">
    <property type="term" value="C:proton-transporting two-sector ATPase complex, proton-transporting domain"/>
    <property type="evidence" value="ECO:0007669"/>
    <property type="project" value="InterPro"/>
</dbReference>
<dbReference type="GO" id="GO:0008289">
    <property type="term" value="F:lipid binding"/>
    <property type="evidence" value="ECO:0007669"/>
    <property type="project" value="UniProtKB-KW"/>
</dbReference>
<dbReference type="GO" id="GO:0046933">
    <property type="term" value="F:proton-transporting ATP synthase activity, rotational mechanism"/>
    <property type="evidence" value="ECO:0007669"/>
    <property type="project" value="UniProtKB-UniRule"/>
</dbReference>
<dbReference type="FunFam" id="1.20.20.10:FF:000001">
    <property type="entry name" value="ATP synthase subunit c, chloroplastic"/>
    <property type="match status" value="1"/>
</dbReference>
<dbReference type="Gene3D" id="1.20.20.10">
    <property type="entry name" value="F1F0 ATP synthase subunit C"/>
    <property type="match status" value="1"/>
</dbReference>
<dbReference type="HAMAP" id="MF_01396">
    <property type="entry name" value="ATP_synth_c_bact"/>
    <property type="match status" value="1"/>
</dbReference>
<dbReference type="InterPro" id="IPR005953">
    <property type="entry name" value="ATP_synth_csu_bac/chlpt"/>
</dbReference>
<dbReference type="InterPro" id="IPR000454">
    <property type="entry name" value="ATP_synth_F0_csu"/>
</dbReference>
<dbReference type="InterPro" id="IPR020537">
    <property type="entry name" value="ATP_synth_F0_csu_DDCD_BS"/>
</dbReference>
<dbReference type="InterPro" id="IPR038662">
    <property type="entry name" value="ATP_synth_F0_csu_sf"/>
</dbReference>
<dbReference type="InterPro" id="IPR002379">
    <property type="entry name" value="ATPase_proteolipid_c-like_dom"/>
</dbReference>
<dbReference type="InterPro" id="IPR035921">
    <property type="entry name" value="F/V-ATP_Csub_sf"/>
</dbReference>
<dbReference type="NCBIfam" id="TIGR01260">
    <property type="entry name" value="ATP_synt_c"/>
    <property type="match status" value="1"/>
</dbReference>
<dbReference type="NCBIfam" id="NF005608">
    <property type="entry name" value="PRK07354.1"/>
    <property type="match status" value="1"/>
</dbReference>
<dbReference type="PANTHER" id="PTHR10031">
    <property type="entry name" value="ATP SYNTHASE LIPID-BINDING PROTEIN, MITOCHONDRIAL"/>
    <property type="match status" value="1"/>
</dbReference>
<dbReference type="PANTHER" id="PTHR10031:SF0">
    <property type="entry name" value="ATPASE PROTEIN 9"/>
    <property type="match status" value="1"/>
</dbReference>
<dbReference type="Pfam" id="PF00137">
    <property type="entry name" value="ATP-synt_C"/>
    <property type="match status" value="1"/>
</dbReference>
<dbReference type="PRINTS" id="PR00124">
    <property type="entry name" value="ATPASEC"/>
</dbReference>
<dbReference type="SUPFAM" id="SSF81333">
    <property type="entry name" value="F1F0 ATP synthase subunit C"/>
    <property type="match status" value="1"/>
</dbReference>
<dbReference type="PROSITE" id="PS00605">
    <property type="entry name" value="ATPASE_C"/>
    <property type="match status" value="1"/>
</dbReference>
<reference key="1">
    <citation type="submission" date="2008-02" db="EMBL/GenBank/DDBJ databases">
        <title>Complete sequence of Synechococcus sp. PCC 7002.</title>
        <authorList>
            <person name="Li T."/>
            <person name="Zhao J."/>
            <person name="Zhao C."/>
            <person name="Liu Z."/>
            <person name="Zhao F."/>
            <person name="Marquardt J."/>
            <person name="Nomura C.T."/>
            <person name="Persson S."/>
            <person name="Detter J.C."/>
            <person name="Richardson P.M."/>
            <person name="Lanz C."/>
            <person name="Schuster S.C."/>
            <person name="Wang J."/>
            <person name="Li S."/>
            <person name="Huang X."/>
            <person name="Cai T."/>
            <person name="Yu Z."/>
            <person name="Luo J."/>
            <person name="Zhao J."/>
            <person name="Bryant D.A."/>
        </authorList>
    </citation>
    <scope>NUCLEOTIDE SEQUENCE [LARGE SCALE GENOMIC DNA]</scope>
    <source>
        <strain>ATCC 27264 / PCC 7002 / PR-6</strain>
    </source>
</reference>
<sequence>MDSLTAAASVIAAALAVGLAAIGPGIGQGNAAGSAAEGIARQPEAEGKIRGTLLLSLAFMEALTIYGLVVALVLLFANPFA</sequence>
<evidence type="ECO:0000255" key="1">
    <source>
        <dbReference type="HAMAP-Rule" id="MF_01396"/>
    </source>
</evidence>
<feature type="chain" id="PRO_0000365927" description="ATP synthase subunit c">
    <location>
        <begin position="1"/>
        <end position="81"/>
    </location>
</feature>
<feature type="transmembrane region" description="Helical" evidence="1">
    <location>
        <begin position="6"/>
        <end position="26"/>
    </location>
</feature>
<feature type="transmembrane region" description="Helical" evidence="1">
    <location>
        <begin position="57"/>
        <end position="77"/>
    </location>
</feature>
<feature type="site" description="Reversibly protonated during proton transport" evidence="1">
    <location>
        <position position="61"/>
    </location>
</feature>
<accession>B1XHZ2</accession>
<gene>
    <name evidence="1" type="primary">atpE</name>
    <name evidence="1" type="synonym">atpH</name>
    <name type="ordered locus">SYNPCC7002_A0738</name>
</gene>